<reference key="1">
    <citation type="journal article" date="2008" name="Chem. Biol. Interact.">
        <title>Extending the Bacillus cereus group genomics to putative food-borne pathogens of different toxicity.</title>
        <authorList>
            <person name="Lapidus A."/>
            <person name="Goltsman E."/>
            <person name="Auger S."/>
            <person name="Galleron N."/>
            <person name="Segurens B."/>
            <person name="Dossat C."/>
            <person name="Land M.L."/>
            <person name="Broussolle V."/>
            <person name="Brillard J."/>
            <person name="Guinebretiere M.-H."/>
            <person name="Sanchis V."/>
            <person name="Nguen-the C."/>
            <person name="Lereclus D."/>
            <person name="Richardson P."/>
            <person name="Wincker P."/>
            <person name="Weissenbach J."/>
            <person name="Ehrlich S.D."/>
            <person name="Sorokin A."/>
        </authorList>
    </citation>
    <scope>NUCLEOTIDE SEQUENCE [LARGE SCALE GENOMIC DNA]</scope>
    <source>
        <strain>DSM 22905 / CIP 110041 / 391-98 / NVH 391-98</strain>
    </source>
</reference>
<evidence type="ECO:0000255" key="1">
    <source>
        <dbReference type="HAMAP-Rule" id="MF_01554"/>
    </source>
</evidence>
<accession>A7GK66</accession>
<proteinExistence type="inferred from homology"/>
<name>GLMM_BACCN</name>
<comment type="function">
    <text evidence="1">Catalyzes the conversion of glucosamine-6-phosphate to glucosamine-1-phosphate.</text>
</comment>
<comment type="catalytic activity">
    <reaction evidence="1">
        <text>alpha-D-glucosamine 1-phosphate = D-glucosamine 6-phosphate</text>
        <dbReference type="Rhea" id="RHEA:23424"/>
        <dbReference type="ChEBI" id="CHEBI:58516"/>
        <dbReference type="ChEBI" id="CHEBI:58725"/>
        <dbReference type="EC" id="5.4.2.10"/>
    </reaction>
</comment>
<comment type="cofactor">
    <cofactor evidence="1">
        <name>Mg(2+)</name>
        <dbReference type="ChEBI" id="CHEBI:18420"/>
    </cofactor>
    <text evidence="1">Binds 1 Mg(2+) ion per subunit.</text>
</comment>
<comment type="PTM">
    <text evidence="1">Activated by phosphorylation.</text>
</comment>
<comment type="similarity">
    <text evidence="1">Belongs to the phosphohexose mutase family.</text>
</comment>
<gene>
    <name evidence="1" type="primary">glmM</name>
    <name type="ordered locus">Bcer98_0150</name>
</gene>
<organism>
    <name type="scientific">Bacillus cytotoxicus (strain DSM 22905 / CIP 110041 / 391-98 / NVH 391-98)</name>
    <dbReference type="NCBI Taxonomy" id="315749"/>
    <lineage>
        <taxon>Bacteria</taxon>
        <taxon>Bacillati</taxon>
        <taxon>Bacillota</taxon>
        <taxon>Bacilli</taxon>
        <taxon>Bacillales</taxon>
        <taxon>Bacillaceae</taxon>
        <taxon>Bacillus</taxon>
        <taxon>Bacillus cereus group</taxon>
    </lineage>
</organism>
<feature type="chain" id="PRO_1000087757" description="Phosphoglucosamine mutase">
    <location>
        <begin position="1"/>
        <end position="448"/>
    </location>
</feature>
<feature type="active site" description="Phosphoserine intermediate" evidence="1">
    <location>
        <position position="100"/>
    </location>
</feature>
<feature type="binding site" description="via phosphate group" evidence="1">
    <location>
        <position position="100"/>
    </location>
    <ligand>
        <name>Mg(2+)</name>
        <dbReference type="ChEBI" id="CHEBI:18420"/>
    </ligand>
</feature>
<feature type="binding site" evidence="1">
    <location>
        <position position="240"/>
    </location>
    <ligand>
        <name>Mg(2+)</name>
        <dbReference type="ChEBI" id="CHEBI:18420"/>
    </ligand>
</feature>
<feature type="binding site" evidence="1">
    <location>
        <position position="242"/>
    </location>
    <ligand>
        <name>Mg(2+)</name>
        <dbReference type="ChEBI" id="CHEBI:18420"/>
    </ligand>
</feature>
<feature type="binding site" evidence="1">
    <location>
        <position position="244"/>
    </location>
    <ligand>
        <name>Mg(2+)</name>
        <dbReference type="ChEBI" id="CHEBI:18420"/>
    </ligand>
</feature>
<feature type="modified residue" description="Phosphoserine" evidence="1">
    <location>
        <position position="100"/>
    </location>
</feature>
<sequence>MGKYFGTDGVRGVANKELTPELAFKIGRFGGYVLTKDTNRPKVIIGRDTRVSGHMLEGALVAGLLSIGAEVMRLGVISTPGVAYLTKALDAQAGVMISASHNPVQDNGIKFFGADGFKLTDEQEAEIEALLDKEVDELPRPIGTNLGQVNDYFEGGQKYLQYIKQTVEEDFSGLHIALDCAHGATSSLAPYLFADLEADISTMGTSPNGMNINDGVGSTHPEGLAELVKEKGADIGLAFDGDGDRLIAVDEKGNIVDGDQIMYICAKYMKETGQLKHNTVVSTVMSNLGFYKALEANGITSDKTAVGDRYVMEEMKRGGYNLGGEQSGHIIMLDYITTGDGMLSALQLVNIMKVTKKPLSELASEMKKFPQLLVNVRVTDKKLALENEKIKEIIRVVEEEMNGDGRVLVRPSGTEPLIRVMAEAPTQELCNEYVHRIVDVVKAEVGAE</sequence>
<dbReference type="EC" id="5.4.2.10" evidence="1"/>
<dbReference type="EMBL" id="CP000764">
    <property type="protein sequence ID" value="ABS20524.1"/>
    <property type="molecule type" value="Genomic_DNA"/>
</dbReference>
<dbReference type="RefSeq" id="WP_011983285.1">
    <property type="nucleotide sequence ID" value="NC_009674.1"/>
</dbReference>
<dbReference type="SMR" id="A7GK66"/>
<dbReference type="STRING" id="315749.Bcer98_0150"/>
<dbReference type="GeneID" id="33895483"/>
<dbReference type="KEGG" id="bcy:Bcer98_0150"/>
<dbReference type="eggNOG" id="COG1109">
    <property type="taxonomic scope" value="Bacteria"/>
</dbReference>
<dbReference type="HOGENOM" id="CLU_016950_7_0_9"/>
<dbReference type="OrthoDB" id="9806956at2"/>
<dbReference type="Proteomes" id="UP000002300">
    <property type="component" value="Chromosome"/>
</dbReference>
<dbReference type="GO" id="GO:0005829">
    <property type="term" value="C:cytosol"/>
    <property type="evidence" value="ECO:0007669"/>
    <property type="project" value="TreeGrafter"/>
</dbReference>
<dbReference type="GO" id="GO:0000287">
    <property type="term" value="F:magnesium ion binding"/>
    <property type="evidence" value="ECO:0007669"/>
    <property type="project" value="UniProtKB-UniRule"/>
</dbReference>
<dbReference type="GO" id="GO:0008966">
    <property type="term" value="F:phosphoglucosamine mutase activity"/>
    <property type="evidence" value="ECO:0007669"/>
    <property type="project" value="UniProtKB-UniRule"/>
</dbReference>
<dbReference type="GO" id="GO:0004615">
    <property type="term" value="F:phosphomannomutase activity"/>
    <property type="evidence" value="ECO:0007669"/>
    <property type="project" value="TreeGrafter"/>
</dbReference>
<dbReference type="GO" id="GO:0005975">
    <property type="term" value="P:carbohydrate metabolic process"/>
    <property type="evidence" value="ECO:0007669"/>
    <property type="project" value="InterPro"/>
</dbReference>
<dbReference type="GO" id="GO:0009252">
    <property type="term" value="P:peptidoglycan biosynthetic process"/>
    <property type="evidence" value="ECO:0007669"/>
    <property type="project" value="TreeGrafter"/>
</dbReference>
<dbReference type="GO" id="GO:0006048">
    <property type="term" value="P:UDP-N-acetylglucosamine biosynthetic process"/>
    <property type="evidence" value="ECO:0007669"/>
    <property type="project" value="TreeGrafter"/>
</dbReference>
<dbReference type="CDD" id="cd05802">
    <property type="entry name" value="GlmM"/>
    <property type="match status" value="1"/>
</dbReference>
<dbReference type="FunFam" id="3.30.310.50:FF:000001">
    <property type="entry name" value="Phosphoglucosamine mutase"/>
    <property type="match status" value="1"/>
</dbReference>
<dbReference type="FunFam" id="3.40.120.10:FF:000001">
    <property type="entry name" value="Phosphoglucosamine mutase"/>
    <property type="match status" value="1"/>
</dbReference>
<dbReference type="FunFam" id="3.40.120.10:FF:000002">
    <property type="entry name" value="Phosphoglucosamine mutase"/>
    <property type="match status" value="1"/>
</dbReference>
<dbReference type="Gene3D" id="3.40.120.10">
    <property type="entry name" value="Alpha-D-Glucose-1,6-Bisphosphate, subunit A, domain 3"/>
    <property type="match status" value="3"/>
</dbReference>
<dbReference type="Gene3D" id="3.30.310.50">
    <property type="entry name" value="Alpha-D-phosphohexomutase, C-terminal domain"/>
    <property type="match status" value="1"/>
</dbReference>
<dbReference type="HAMAP" id="MF_01554_B">
    <property type="entry name" value="GlmM_B"/>
    <property type="match status" value="1"/>
</dbReference>
<dbReference type="InterPro" id="IPR005844">
    <property type="entry name" value="A-D-PHexomutase_a/b/a-I"/>
</dbReference>
<dbReference type="InterPro" id="IPR016055">
    <property type="entry name" value="A-D-PHexomutase_a/b/a-I/II/III"/>
</dbReference>
<dbReference type="InterPro" id="IPR005845">
    <property type="entry name" value="A-D-PHexomutase_a/b/a-II"/>
</dbReference>
<dbReference type="InterPro" id="IPR005846">
    <property type="entry name" value="A-D-PHexomutase_a/b/a-III"/>
</dbReference>
<dbReference type="InterPro" id="IPR005843">
    <property type="entry name" value="A-D-PHexomutase_C"/>
</dbReference>
<dbReference type="InterPro" id="IPR036900">
    <property type="entry name" value="A-D-PHexomutase_C_sf"/>
</dbReference>
<dbReference type="InterPro" id="IPR016066">
    <property type="entry name" value="A-D-PHexomutase_CS"/>
</dbReference>
<dbReference type="InterPro" id="IPR005841">
    <property type="entry name" value="Alpha-D-phosphohexomutase_SF"/>
</dbReference>
<dbReference type="InterPro" id="IPR006352">
    <property type="entry name" value="GlmM_bact"/>
</dbReference>
<dbReference type="InterPro" id="IPR050060">
    <property type="entry name" value="Phosphoglucosamine_mutase"/>
</dbReference>
<dbReference type="NCBIfam" id="TIGR01455">
    <property type="entry name" value="glmM"/>
    <property type="match status" value="1"/>
</dbReference>
<dbReference type="NCBIfam" id="NF008139">
    <property type="entry name" value="PRK10887.1"/>
    <property type="match status" value="1"/>
</dbReference>
<dbReference type="PANTHER" id="PTHR42946:SF1">
    <property type="entry name" value="PHOSPHOGLUCOMUTASE (ALPHA-D-GLUCOSE-1,6-BISPHOSPHATE-DEPENDENT)"/>
    <property type="match status" value="1"/>
</dbReference>
<dbReference type="PANTHER" id="PTHR42946">
    <property type="entry name" value="PHOSPHOHEXOSE MUTASE"/>
    <property type="match status" value="1"/>
</dbReference>
<dbReference type="Pfam" id="PF02878">
    <property type="entry name" value="PGM_PMM_I"/>
    <property type="match status" value="1"/>
</dbReference>
<dbReference type="Pfam" id="PF02879">
    <property type="entry name" value="PGM_PMM_II"/>
    <property type="match status" value="1"/>
</dbReference>
<dbReference type="Pfam" id="PF02880">
    <property type="entry name" value="PGM_PMM_III"/>
    <property type="match status" value="1"/>
</dbReference>
<dbReference type="Pfam" id="PF00408">
    <property type="entry name" value="PGM_PMM_IV"/>
    <property type="match status" value="1"/>
</dbReference>
<dbReference type="PRINTS" id="PR00509">
    <property type="entry name" value="PGMPMM"/>
</dbReference>
<dbReference type="SUPFAM" id="SSF55957">
    <property type="entry name" value="Phosphoglucomutase, C-terminal domain"/>
    <property type="match status" value="1"/>
</dbReference>
<dbReference type="SUPFAM" id="SSF53738">
    <property type="entry name" value="Phosphoglucomutase, first 3 domains"/>
    <property type="match status" value="3"/>
</dbReference>
<dbReference type="PROSITE" id="PS00710">
    <property type="entry name" value="PGM_PMM"/>
    <property type="match status" value="1"/>
</dbReference>
<protein>
    <recommendedName>
        <fullName evidence="1">Phosphoglucosamine mutase</fullName>
        <ecNumber evidence="1">5.4.2.10</ecNumber>
    </recommendedName>
</protein>
<keyword id="KW-0413">Isomerase</keyword>
<keyword id="KW-0460">Magnesium</keyword>
<keyword id="KW-0479">Metal-binding</keyword>
<keyword id="KW-0597">Phosphoprotein</keyword>